<name>PROB_BURO0</name>
<evidence type="ECO:0000255" key="1">
    <source>
        <dbReference type="HAMAP-Rule" id="MF_00456"/>
    </source>
</evidence>
<gene>
    <name evidence="1" type="primary">proB</name>
    <name type="ordered locus">Bcenmc03_0554</name>
</gene>
<protein>
    <recommendedName>
        <fullName evidence="1">Glutamate 5-kinase</fullName>
        <ecNumber evidence="1">2.7.2.11</ecNumber>
    </recommendedName>
    <alternativeName>
        <fullName evidence="1">Gamma-glutamyl kinase</fullName>
        <shortName evidence="1">GK</shortName>
    </alternativeName>
</protein>
<organism>
    <name type="scientific">Burkholderia orbicola (strain MC0-3)</name>
    <dbReference type="NCBI Taxonomy" id="406425"/>
    <lineage>
        <taxon>Bacteria</taxon>
        <taxon>Pseudomonadati</taxon>
        <taxon>Pseudomonadota</taxon>
        <taxon>Betaproteobacteria</taxon>
        <taxon>Burkholderiales</taxon>
        <taxon>Burkholderiaceae</taxon>
        <taxon>Burkholderia</taxon>
        <taxon>Burkholderia cepacia complex</taxon>
        <taxon>Burkholderia orbicola</taxon>
    </lineage>
</organism>
<feature type="chain" id="PRO_1000125217" description="Glutamate 5-kinase">
    <location>
        <begin position="1"/>
        <end position="372"/>
    </location>
</feature>
<feature type="domain" description="PUA" evidence="1">
    <location>
        <begin position="280"/>
        <end position="358"/>
    </location>
</feature>
<feature type="binding site" evidence="1">
    <location>
        <position position="14"/>
    </location>
    <ligand>
        <name>ATP</name>
        <dbReference type="ChEBI" id="CHEBI:30616"/>
    </ligand>
</feature>
<feature type="binding site" evidence="1">
    <location>
        <position position="54"/>
    </location>
    <ligand>
        <name>substrate</name>
    </ligand>
</feature>
<feature type="binding site" evidence="1">
    <location>
        <position position="141"/>
    </location>
    <ligand>
        <name>substrate</name>
    </ligand>
</feature>
<feature type="binding site" evidence="1">
    <location>
        <position position="153"/>
    </location>
    <ligand>
        <name>substrate</name>
    </ligand>
</feature>
<feature type="binding site" evidence="1">
    <location>
        <begin position="173"/>
        <end position="174"/>
    </location>
    <ligand>
        <name>ATP</name>
        <dbReference type="ChEBI" id="CHEBI:30616"/>
    </ligand>
</feature>
<keyword id="KW-0028">Amino-acid biosynthesis</keyword>
<keyword id="KW-0067">ATP-binding</keyword>
<keyword id="KW-0963">Cytoplasm</keyword>
<keyword id="KW-0418">Kinase</keyword>
<keyword id="KW-0547">Nucleotide-binding</keyword>
<keyword id="KW-0641">Proline biosynthesis</keyword>
<keyword id="KW-0808">Transferase</keyword>
<dbReference type="EC" id="2.7.2.11" evidence="1"/>
<dbReference type="EMBL" id="CP000958">
    <property type="protein sequence ID" value="ACA89732.1"/>
    <property type="molecule type" value="Genomic_DNA"/>
</dbReference>
<dbReference type="RefSeq" id="WP_012327864.1">
    <property type="nucleotide sequence ID" value="NC_010508.1"/>
</dbReference>
<dbReference type="SMR" id="B1JVA2"/>
<dbReference type="GeneID" id="83047356"/>
<dbReference type="KEGG" id="bcm:Bcenmc03_0554"/>
<dbReference type="HOGENOM" id="CLU_025400_2_0_4"/>
<dbReference type="UniPathway" id="UPA00098">
    <property type="reaction ID" value="UER00359"/>
</dbReference>
<dbReference type="Proteomes" id="UP000002169">
    <property type="component" value="Chromosome 1"/>
</dbReference>
<dbReference type="GO" id="GO:0005829">
    <property type="term" value="C:cytosol"/>
    <property type="evidence" value="ECO:0007669"/>
    <property type="project" value="TreeGrafter"/>
</dbReference>
<dbReference type="GO" id="GO:0005524">
    <property type="term" value="F:ATP binding"/>
    <property type="evidence" value="ECO:0007669"/>
    <property type="project" value="UniProtKB-KW"/>
</dbReference>
<dbReference type="GO" id="GO:0004349">
    <property type="term" value="F:glutamate 5-kinase activity"/>
    <property type="evidence" value="ECO:0007669"/>
    <property type="project" value="UniProtKB-UniRule"/>
</dbReference>
<dbReference type="GO" id="GO:0003723">
    <property type="term" value="F:RNA binding"/>
    <property type="evidence" value="ECO:0007669"/>
    <property type="project" value="InterPro"/>
</dbReference>
<dbReference type="GO" id="GO:0055129">
    <property type="term" value="P:L-proline biosynthetic process"/>
    <property type="evidence" value="ECO:0007669"/>
    <property type="project" value="UniProtKB-UniRule"/>
</dbReference>
<dbReference type="CDD" id="cd04242">
    <property type="entry name" value="AAK_G5K_ProB"/>
    <property type="match status" value="1"/>
</dbReference>
<dbReference type="CDD" id="cd21157">
    <property type="entry name" value="PUA_G5K"/>
    <property type="match status" value="1"/>
</dbReference>
<dbReference type="FunFam" id="2.30.130.10:FF:000007">
    <property type="entry name" value="Glutamate 5-kinase"/>
    <property type="match status" value="1"/>
</dbReference>
<dbReference type="FunFam" id="3.40.1160.10:FF:000018">
    <property type="entry name" value="Glutamate 5-kinase"/>
    <property type="match status" value="1"/>
</dbReference>
<dbReference type="Gene3D" id="3.40.1160.10">
    <property type="entry name" value="Acetylglutamate kinase-like"/>
    <property type="match status" value="1"/>
</dbReference>
<dbReference type="Gene3D" id="2.30.130.10">
    <property type="entry name" value="PUA domain"/>
    <property type="match status" value="1"/>
</dbReference>
<dbReference type="HAMAP" id="MF_00456">
    <property type="entry name" value="ProB"/>
    <property type="match status" value="1"/>
</dbReference>
<dbReference type="InterPro" id="IPR036393">
    <property type="entry name" value="AceGlu_kinase-like_sf"/>
</dbReference>
<dbReference type="InterPro" id="IPR001048">
    <property type="entry name" value="Asp/Glu/Uridylate_kinase"/>
</dbReference>
<dbReference type="InterPro" id="IPR041739">
    <property type="entry name" value="G5K_ProB"/>
</dbReference>
<dbReference type="InterPro" id="IPR001057">
    <property type="entry name" value="Glu/AcGlu_kinase"/>
</dbReference>
<dbReference type="InterPro" id="IPR011529">
    <property type="entry name" value="Glu_5kinase"/>
</dbReference>
<dbReference type="InterPro" id="IPR005715">
    <property type="entry name" value="Glu_5kinase/COase_Synthase"/>
</dbReference>
<dbReference type="InterPro" id="IPR019797">
    <property type="entry name" value="Glutamate_5-kinase_CS"/>
</dbReference>
<dbReference type="InterPro" id="IPR002478">
    <property type="entry name" value="PUA"/>
</dbReference>
<dbReference type="InterPro" id="IPR015947">
    <property type="entry name" value="PUA-like_sf"/>
</dbReference>
<dbReference type="InterPro" id="IPR036974">
    <property type="entry name" value="PUA_sf"/>
</dbReference>
<dbReference type="NCBIfam" id="TIGR01027">
    <property type="entry name" value="proB"/>
    <property type="match status" value="1"/>
</dbReference>
<dbReference type="PANTHER" id="PTHR43654">
    <property type="entry name" value="GLUTAMATE 5-KINASE"/>
    <property type="match status" value="1"/>
</dbReference>
<dbReference type="PANTHER" id="PTHR43654:SF1">
    <property type="entry name" value="ISOPENTENYL PHOSPHATE KINASE"/>
    <property type="match status" value="1"/>
</dbReference>
<dbReference type="Pfam" id="PF00696">
    <property type="entry name" value="AA_kinase"/>
    <property type="match status" value="1"/>
</dbReference>
<dbReference type="Pfam" id="PF01472">
    <property type="entry name" value="PUA"/>
    <property type="match status" value="1"/>
</dbReference>
<dbReference type="PIRSF" id="PIRSF000729">
    <property type="entry name" value="GK"/>
    <property type="match status" value="1"/>
</dbReference>
<dbReference type="PRINTS" id="PR00474">
    <property type="entry name" value="GLU5KINASE"/>
</dbReference>
<dbReference type="SMART" id="SM00359">
    <property type="entry name" value="PUA"/>
    <property type="match status" value="1"/>
</dbReference>
<dbReference type="SUPFAM" id="SSF53633">
    <property type="entry name" value="Carbamate kinase-like"/>
    <property type="match status" value="1"/>
</dbReference>
<dbReference type="SUPFAM" id="SSF88697">
    <property type="entry name" value="PUA domain-like"/>
    <property type="match status" value="1"/>
</dbReference>
<dbReference type="PROSITE" id="PS00902">
    <property type="entry name" value="GLUTAMATE_5_KINASE"/>
    <property type="match status" value="1"/>
</dbReference>
<dbReference type="PROSITE" id="PS50890">
    <property type="entry name" value="PUA"/>
    <property type="match status" value="1"/>
</dbReference>
<sequence length="372" mass="39224">MRSIIADSKRLVVKVGSSLVTNDGKGLDHAAIGRWAAQIAALRAQGKEVVLVSSGAIAEGMQRLGWSKRPREIDELQAAAAVGQMGLAQVYESRFTEHGIRTAQILLTHADLADRERYLNARSTLLTLLRLGVVPIINENDTVVTDEIKFGDNDTLGALVANLIEGDALIILTDQSGLFTADPRKDPNATLVGEANAGAPELEAMAGGAGSSLGRGGMLTKILAAKRAAHSGANTVIASGREADVLVRLAAGEAIGTQLIARTARMAARKQWMADHLQVRGHVVIDAGAVEKLTAGGKSLLPIGVIDVQGAFARGEVIACVGPDGREVARGLTNYSSAETKLIHRKPSGEIEIVLGYMLEPELIHRDNLVLV</sequence>
<proteinExistence type="inferred from homology"/>
<comment type="function">
    <text evidence="1">Catalyzes the transfer of a phosphate group to glutamate to form L-glutamate 5-phosphate.</text>
</comment>
<comment type="catalytic activity">
    <reaction evidence="1">
        <text>L-glutamate + ATP = L-glutamyl 5-phosphate + ADP</text>
        <dbReference type="Rhea" id="RHEA:14877"/>
        <dbReference type="ChEBI" id="CHEBI:29985"/>
        <dbReference type="ChEBI" id="CHEBI:30616"/>
        <dbReference type="ChEBI" id="CHEBI:58274"/>
        <dbReference type="ChEBI" id="CHEBI:456216"/>
        <dbReference type="EC" id="2.7.2.11"/>
    </reaction>
</comment>
<comment type="pathway">
    <text evidence="1">Amino-acid biosynthesis; L-proline biosynthesis; L-glutamate 5-semialdehyde from L-glutamate: step 1/2.</text>
</comment>
<comment type="subcellular location">
    <subcellularLocation>
        <location evidence="1">Cytoplasm</location>
    </subcellularLocation>
</comment>
<comment type="similarity">
    <text evidence="1">Belongs to the glutamate 5-kinase family.</text>
</comment>
<reference key="1">
    <citation type="submission" date="2008-02" db="EMBL/GenBank/DDBJ databases">
        <title>Complete sequence of chromosome 1 of Burkholderia cenocepacia MC0-3.</title>
        <authorList>
            <person name="Copeland A."/>
            <person name="Lucas S."/>
            <person name="Lapidus A."/>
            <person name="Barry K."/>
            <person name="Bruce D."/>
            <person name="Goodwin L."/>
            <person name="Glavina del Rio T."/>
            <person name="Dalin E."/>
            <person name="Tice H."/>
            <person name="Pitluck S."/>
            <person name="Chain P."/>
            <person name="Malfatti S."/>
            <person name="Shin M."/>
            <person name="Vergez L."/>
            <person name="Schmutz J."/>
            <person name="Larimer F."/>
            <person name="Land M."/>
            <person name="Hauser L."/>
            <person name="Kyrpides N."/>
            <person name="Mikhailova N."/>
            <person name="Tiedje J."/>
            <person name="Richardson P."/>
        </authorList>
    </citation>
    <scope>NUCLEOTIDE SEQUENCE [LARGE SCALE GENOMIC DNA]</scope>
    <source>
        <strain>MC0-3</strain>
    </source>
</reference>
<accession>B1JVA2</accession>